<name>BP08_BPT4</name>
<evidence type="ECO:0000269" key="1">
    <source>
    </source>
</evidence>
<evidence type="ECO:0000269" key="2">
    <source>
    </source>
</evidence>
<evidence type="ECO:0000269" key="3">
    <source>
    </source>
</evidence>
<evidence type="ECO:0000269" key="4">
    <source>
    </source>
</evidence>
<evidence type="ECO:0000303" key="5">
    <source>
    </source>
</evidence>
<evidence type="ECO:0000305" key="6"/>
<evidence type="ECO:0007829" key="7">
    <source>
        <dbReference type="PDB" id="1N7Z"/>
    </source>
</evidence>
<evidence type="ECO:0007829" key="8">
    <source>
        <dbReference type="PDB" id="1N8B"/>
    </source>
</evidence>
<comment type="function">
    <text evidence="1 4 5">Intermediate baseplate protein. Involved in the tail assembly.</text>
</comment>
<comment type="subunit">
    <text evidence="2 4">Homodimer (PubMed:19896486, PubMed:2403438, PubMed:27193680). Interacts with gp7. Part of the baseplate macromolecular complex which consists of gp5, gp5.4, gp27 (central spike complex); gp6, gp25, gp53 (inner baseplate); gp7, gp8 (intermediate baseplate); gp9, gp10, gp11, gp12 (peripheral); gp48 and gp54 (proximal region of the tail tube).</text>
</comment>
<comment type="subcellular location">
    <subcellularLocation>
        <location evidence="3 4">Virion</location>
    </subcellularLocation>
    <text evidence="5">Present in 12 copies in the baseplate.</text>
</comment>
<comment type="induction">
    <text evidence="6">Expressed in the late phase of the viral replicative cycle.</text>
</comment>
<comment type="similarity">
    <text evidence="6">Belongs to the tevenvirinae baseplate structural protein gp8 family.</text>
</comment>
<dbReference type="EMBL" id="X15907">
    <property type="protein sequence ID" value="CAA34023.1"/>
    <property type="molecule type" value="Genomic_DNA"/>
</dbReference>
<dbReference type="EMBL" id="AF158101">
    <property type="protein sequence ID" value="AAD42519.1"/>
    <property type="molecule type" value="Genomic_DNA"/>
</dbReference>
<dbReference type="PIR" id="JQ0658">
    <property type="entry name" value="G8BPT4"/>
</dbReference>
<dbReference type="RefSeq" id="NP_049766.1">
    <property type="nucleotide sequence ID" value="NC_000866.4"/>
</dbReference>
<dbReference type="PDB" id="1N7Z">
    <property type="method" value="X-ray"/>
    <property type="resolution" value="2.00 A"/>
    <property type="chains" value="A/B/C/D=1-334"/>
</dbReference>
<dbReference type="PDB" id="1N80">
    <property type="method" value="X-ray"/>
    <property type="resolution" value="2.45 A"/>
    <property type="chains" value="A/B/C/D=1-334"/>
</dbReference>
<dbReference type="PDB" id="1N8B">
    <property type="method" value="X-ray"/>
    <property type="resolution" value="2.90 A"/>
    <property type="chains" value="A/B/C/D=1-334"/>
</dbReference>
<dbReference type="PDB" id="1PDM">
    <property type="method" value="EM"/>
    <property type="resolution" value="12.00 A"/>
    <property type="chains" value="A/B/C/D/E/F/G/H/I/J/K/L=1-334"/>
</dbReference>
<dbReference type="PDB" id="1TJA">
    <property type="method" value="EM"/>
    <property type="resolution" value="16.00 A"/>
    <property type="chains" value="A/B=1-334"/>
</dbReference>
<dbReference type="PDB" id="5HX2">
    <property type="method" value="EM"/>
    <property type="resolution" value="3.80 A"/>
    <property type="chains" value="B/C=1-334"/>
</dbReference>
<dbReference type="PDB" id="5IV5">
    <property type="method" value="EM"/>
    <property type="resolution" value="4.11 A"/>
    <property type="chains" value="CA/CB/D/E/ED/EE/GG/GH/a/b/x/y=1-334"/>
</dbReference>
<dbReference type="PDB" id="5IV7">
    <property type="method" value="EM"/>
    <property type="resolution" value="6.77 A"/>
    <property type="chains" value="AA/CB/CC/D/E/ED/EE/T/U/j/k/z=1-334"/>
</dbReference>
<dbReference type="PDBsum" id="1N7Z"/>
<dbReference type="PDBsum" id="1N80"/>
<dbReference type="PDBsum" id="1N8B"/>
<dbReference type="PDBsum" id="1PDM"/>
<dbReference type="PDBsum" id="1TJA"/>
<dbReference type="PDBsum" id="5HX2"/>
<dbReference type="PDBsum" id="5IV5"/>
<dbReference type="PDBsum" id="5IV7"/>
<dbReference type="EMDB" id="EMD-8064"/>
<dbReference type="SMR" id="P19062"/>
<dbReference type="TCDB" id="1.K.1.1.1">
    <property type="family name" value="the gp27/5 t4-baseplate (t4-bp) family"/>
</dbReference>
<dbReference type="GeneID" id="1258542"/>
<dbReference type="KEGG" id="vg:1258542"/>
<dbReference type="OrthoDB" id="4009at10239"/>
<dbReference type="EvolutionaryTrace" id="P19062"/>
<dbReference type="Proteomes" id="UP000009087">
    <property type="component" value="Segment"/>
</dbReference>
<dbReference type="GO" id="GO:0098025">
    <property type="term" value="C:virus tail, baseplate"/>
    <property type="evidence" value="ECO:0000314"/>
    <property type="project" value="UniProtKB"/>
</dbReference>
<dbReference type="GO" id="GO:0098003">
    <property type="term" value="P:viral tail assembly"/>
    <property type="evidence" value="ECO:0007669"/>
    <property type="project" value="UniProtKB-KW"/>
</dbReference>
<dbReference type="FunFam" id="2.170.290.10:FF:000001">
    <property type="entry name" value="Baseplate wedge protein gp8"/>
    <property type="match status" value="1"/>
</dbReference>
<dbReference type="Gene3D" id="2.60.340.10">
    <property type="entry name" value="baseplate structural protein gp8, domain 1"/>
    <property type="match status" value="1"/>
</dbReference>
<dbReference type="Gene3D" id="2.170.290.10">
    <property type="entry name" value="baseplate structural protein gp8, domain 2"/>
    <property type="match status" value="1"/>
</dbReference>
<dbReference type="InterPro" id="IPR036327">
    <property type="entry name" value="Gp8_sf"/>
</dbReference>
<dbReference type="InterPro" id="IPR015298">
    <property type="entry name" value="Phage_T4_Gp8"/>
</dbReference>
<dbReference type="Pfam" id="PF09215">
    <property type="entry name" value="Phage-Gp8"/>
    <property type="match status" value="1"/>
</dbReference>
<dbReference type="SUPFAM" id="SSF89433">
    <property type="entry name" value="Baseplate structural protein gp8"/>
    <property type="match status" value="1"/>
</dbReference>
<reference key="1">
    <citation type="journal article" date="1990" name="Nucleic Acids Res.">
        <title>Nucleotide sequences of bacteriophage T4 genes 6, 7 and 8.</title>
        <authorList>
            <person name="Efimov V.P."/>
            <person name="Prilipov A.G."/>
            <person name="Mesyanzhinov V.V."/>
        </authorList>
    </citation>
    <scope>NUCLEOTIDE SEQUENCE [GENOMIC DNA]</scope>
    <source>
        <strain>D</strain>
    </source>
</reference>
<reference key="2">
    <citation type="journal article" date="2003" name="Microbiol. Mol. Biol. Rev.">
        <title>Bacteriophage T4 genome.</title>
        <authorList>
            <person name="Miller E.S."/>
            <person name="Kutter E."/>
            <person name="Mosig G."/>
            <person name="Arisaka F."/>
            <person name="Kunisawa T."/>
            <person name="Ruger W."/>
        </authorList>
    </citation>
    <scope>NUCLEOTIDE SEQUENCE [LARGE SCALE GENOMIC DNA]</scope>
</reference>
<reference key="3">
    <citation type="journal article" date="1990" name="J. Virol.">
        <title>Structure of the bacteriophage T4 baseplate as determined by chemical cross-linking.</title>
        <authorList>
            <person name="Watts N.R."/>
            <person name="Coombs D.H."/>
        </authorList>
    </citation>
    <scope>SUBCELLULAR LOCATION</scope>
</reference>
<reference key="4">
    <citation type="journal article" date="2003" name="Cell. Mol. Life Sci.">
        <title>Structure and morphogenesis of bacteriophage T4.</title>
        <authorList>
            <person name="Leiman P.G."/>
            <person name="Kanamaru S."/>
            <person name="Mesyanzhinov V.V."/>
            <person name="Arisaka F."/>
            <person name="Rossmann M.G."/>
        </authorList>
    </citation>
    <scope>REVIEW</scope>
</reference>
<reference key="5">
    <citation type="journal article" date="2010" name="Virol. J.">
        <title>Morphogenesis of the T4 tail and tail fibers.</title>
        <authorList>
            <person name="Leiman P.G."/>
            <person name="Arisaka F."/>
            <person name="van Raaij M.J."/>
            <person name="Kostyuchenko V.A."/>
            <person name="Aksyuk A.A."/>
            <person name="Kanamaru S."/>
            <person name="Rossmann M.G."/>
        </authorList>
    </citation>
    <scope>REVIEW ON FUNCTION</scope>
</reference>
<reference key="6">
    <citation type="journal article" date="2010" name="J. Mol. Biol.">
        <title>The baseplate wedges of bacteriophage T4 spontaneously assemble into hubless baseplate-like structure in vitro.</title>
        <authorList>
            <person name="Yap M.L."/>
            <person name="Mio K."/>
            <person name="Leiman P.G."/>
            <person name="Kanamaru S."/>
            <person name="Arisaka F."/>
        </authorList>
    </citation>
    <scope>SUBUNIT</scope>
</reference>
<reference key="7">
    <citation type="journal article" date="2003" name="J. Mol. Biol.">
        <title>Structure and location of gene product 8 in the bacteriophage T4 baseplate.</title>
        <authorList>
            <person name="Leiman P.G."/>
            <person name="Shneider M.M."/>
            <person name="Kostyuchenko V.A."/>
            <person name="Chipman P.R."/>
            <person name="Mesyanzhinov V.V."/>
            <person name="Rossmann M.G."/>
        </authorList>
    </citation>
    <scope>X-RAY CRYSTALLOGRAPHY (2.0 ANGSTROMS) OF 7-334</scope>
</reference>
<reference key="8">
    <citation type="journal article" date="2004" name="Cell">
        <title>Three-dimensional rearrangement of proteins in the tail of bacteriophage T4 on infection of its host.</title>
        <authorList>
            <person name="Leiman P.G."/>
            <person name="Chipman P.R."/>
            <person name="Kostyuchenko V.A."/>
            <person name="Mesyanzhinov V.V."/>
            <person name="Rossmann M.G."/>
        </authorList>
    </citation>
    <scope>STRUCTURE BY ELECTRON MICROSCOPY (17.0 ANGSTROMS) OF THE CONTRACTED TAIL</scope>
    <scope>SUBCELLULAR LOCATION</scope>
    <scope>FUNCTION</scope>
</reference>
<reference key="9">
    <citation type="journal article" date="2016" name="Nature">
        <title>Structure of the T4 baseplate and its function in triggering sheath contraction.</title>
        <authorList>
            <person name="Taylor N.M."/>
            <person name="Prokhorov N.S."/>
            <person name="Guerrero-Ferreira R.C."/>
            <person name="Shneider M.M."/>
            <person name="Browning C."/>
            <person name="Goldie K.N."/>
            <person name="Stahlberg H."/>
            <person name="Leiman P.G."/>
        </authorList>
    </citation>
    <scope>STRUCTURE BY ELECTRON MICROSCOPY (4.11 ANGSTROMS)</scope>
    <scope>SUBUNIT</scope>
    <scope>SUBCELLULAR LOCATION</scope>
    <scope>FUNCTION</scope>
</reference>
<feature type="chain" id="PRO_0000164998" description="Baseplate wedge protein gp8">
    <location>
        <begin position="1"/>
        <end position="334"/>
    </location>
</feature>
<feature type="disulfide bond">
    <location>
        <begin position="142"/>
        <end position="153"/>
    </location>
</feature>
<feature type="strand" evidence="7">
    <location>
        <begin position="9"/>
        <end position="12"/>
    </location>
</feature>
<feature type="helix" evidence="7">
    <location>
        <begin position="14"/>
        <end position="27"/>
    </location>
</feature>
<feature type="strand" evidence="7">
    <location>
        <begin position="28"/>
        <end position="31"/>
    </location>
</feature>
<feature type="strand" evidence="7">
    <location>
        <begin position="37"/>
        <end position="42"/>
    </location>
</feature>
<feature type="helix" evidence="7">
    <location>
        <begin position="49"/>
        <end position="52"/>
    </location>
</feature>
<feature type="helix" evidence="7">
    <location>
        <begin position="65"/>
        <end position="74"/>
    </location>
</feature>
<feature type="strand" evidence="7">
    <location>
        <begin position="75"/>
        <end position="81"/>
    </location>
</feature>
<feature type="helix" evidence="7">
    <location>
        <begin position="83"/>
        <end position="85"/>
    </location>
</feature>
<feature type="strand" evidence="7">
    <location>
        <begin position="86"/>
        <end position="91"/>
    </location>
</feature>
<feature type="strand" evidence="7">
    <location>
        <begin position="111"/>
        <end position="117"/>
    </location>
</feature>
<feature type="turn" evidence="7">
    <location>
        <begin position="118"/>
        <end position="120"/>
    </location>
</feature>
<feature type="strand" evidence="7">
    <location>
        <begin position="128"/>
        <end position="135"/>
    </location>
</feature>
<feature type="strand" evidence="7">
    <location>
        <begin position="138"/>
        <end position="144"/>
    </location>
</feature>
<feature type="helix" evidence="7">
    <location>
        <begin position="150"/>
        <end position="155"/>
    </location>
</feature>
<feature type="strand" evidence="7">
    <location>
        <begin position="160"/>
        <end position="164"/>
    </location>
</feature>
<feature type="strand" evidence="8">
    <location>
        <begin position="175"/>
        <end position="177"/>
    </location>
</feature>
<feature type="strand" evidence="7">
    <location>
        <begin position="183"/>
        <end position="185"/>
    </location>
</feature>
<feature type="strand" evidence="7">
    <location>
        <begin position="187"/>
        <end position="194"/>
    </location>
</feature>
<feature type="helix" evidence="7">
    <location>
        <begin position="196"/>
        <end position="202"/>
    </location>
</feature>
<feature type="strand" evidence="7">
    <location>
        <begin position="205"/>
        <end position="210"/>
    </location>
</feature>
<feature type="helix" evidence="7">
    <location>
        <begin position="213"/>
        <end position="218"/>
    </location>
</feature>
<feature type="helix" evidence="7">
    <location>
        <begin position="220"/>
        <end position="223"/>
    </location>
</feature>
<feature type="helix" evidence="7">
    <location>
        <begin position="231"/>
        <end position="234"/>
    </location>
</feature>
<feature type="helix" evidence="7">
    <location>
        <begin position="238"/>
        <end position="241"/>
    </location>
</feature>
<feature type="strand" evidence="7">
    <location>
        <begin position="246"/>
        <end position="249"/>
    </location>
</feature>
<feature type="strand" evidence="7">
    <location>
        <begin position="251"/>
        <end position="254"/>
    </location>
</feature>
<feature type="turn" evidence="7">
    <location>
        <begin position="255"/>
        <end position="257"/>
    </location>
</feature>
<feature type="helix" evidence="7">
    <location>
        <begin position="259"/>
        <end position="262"/>
    </location>
</feature>
<feature type="strand" evidence="7">
    <location>
        <begin position="269"/>
        <end position="277"/>
    </location>
</feature>
<feature type="strand" evidence="7">
    <location>
        <begin position="294"/>
        <end position="297"/>
    </location>
</feature>
<feature type="helix" evidence="7">
    <location>
        <begin position="299"/>
        <end position="301"/>
    </location>
</feature>
<feature type="strand" evidence="7">
    <location>
        <begin position="307"/>
        <end position="318"/>
    </location>
</feature>
<feature type="strand" evidence="7">
    <location>
        <begin position="325"/>
        <end position="328"/>
    </location>
</feature>
<feature type="strand" evidence="7">
    <location>
        <begin position="331"/>
        <end position="333"/>
    </location>
</feature>
<sequence>MNDSSVIYRAIVTSKFRTEKMLNFYNSIGSGPDKNTIFITFGRSEPWSSNENEVGFAPPYPTDSVLGVTDMWTHMMGTVKVLPSMLDAVIPRRDWGDTRYPDPYTFRINDIVVCNSAPYNATESGAGWLVYRCLDVPDTGMCSIASLTDKDECLKLGGKWTPSARSMTPPEGRGDAEGTIEPGDGYVWEYLFEIPPDVSINRCTNEYIVVPWPEELKEDPTRWGYEDNLTWQQDDFGLIYRVKANTIRFKAYLDSVYFPEAALPGNKGFRQISIITNPLEAKAHPNDPNVKAEKDYYDPEDLMRHSGEMIYMENRPPIIMAMDQTEEINILFTF</sequence>
<keyword id="KW-0002">3D-structure</keyword>
<keyword id="KW-1015">Disulfide bond</keyword>
<keyword id="KW-1185">Reference proteome</keyword>
<keyword id="KW-1226">Viral baseplate protein</keyword>
<keyword id="KW-1188">Viral release from host cell</keyword>
<keyword id="KW-1245">Viral tail assembly</keyword>
<keyword id="KW-1227">Viral tail protein</keyword>
<keyword id="KW-0946">Virion</keyword>
<gene>
    <name type="primary">8</name>
</gene>
<accession>P19062</accession>
<proteinExistence type="evidence at protein level"/>
<organism>
    <name type="scientific">Enterobacteria phage T4</name>
    <name type="common">Bacteriophage T4</name>
    <dbReference type="NCBI Taxonomy" id="10665"/>
    <lineage>
        <taxon>Viruses</taxon>
        <taxon>Duplodnaviria</taxon>
        <taxon>Heunggongvirae</taxon>
        <taxon>Uroviricota</taxon>
        <taxon>Caudoviricetes</taxon>
        <taxon>Straboviridae</taxon>
        <taxon>Tevenvirinae</taxon>
        <taxon>Tequatrovirus</taxon>
    </lineage>
</organism>
<organismHost>
    <name type="scientific">Escherichia coli</name>
    <dbReference type="NCBI Taxonomy" id="562"/>
</organismHost>
<protein>
    <recommendedName>
        <fullName evidence="6">Baseplate wedge protein gp8</fullName>
    </recommendedName>
    <alternativeName>
        <fullName>Gene product 8</fullName>
        <shortName>gp8</shortName>
    </alternativeName>
</protein>